<protein>
    <recommendedName>
        <fullName evidence="1">Large ribosomal subunit protein bL12</fullName>
    </recommendedName>
    <alternativeName>
        <fullName evidence="2">50S ribosomal protein L7/L12</fullName>
    </alternativeName>
</protein>
<reference key="1">
    <citation type="journal article" date="2001" name="Science">
        <title>Comparative genomics of Listeria species.</title>
        <authorList>
            <person name="Glaser P."/>
            <person name="Frangeul L."/>
            <person name="Buchrieser C."/>
            <person name="Rusniok C."/>
            <person name="Amend A."/>
            <person name="Baquero F."/>
            <person name="Berche P."/>
            <person name="Bloecker H."/>
            <person name="Brandt P."/>
            <person name="Chakraborty T."/>
            <person name="Charbit A."/>
            <person name="Chetouani F."/>
            <person name="Couve E."/>
            <person name="de Daruvar A."/>
            <person name="Dehoux P."/>
            <person name="Domann E."/>
            <person name="Dominguez-Bernal G."/>
            <person name="Duchaud E."/>
            <person name="Durant L."/>
            <person name="Dussurget O."/>
            <person name="Entian K.-D."/>
            <person name="Fsihi H."/>
            <person name="Garcia-del Portillo F."/>
            <person name="Garrido P."/>
            <person name="Gautier L."/>
            <person name="Goebel W."/>
            <person name="Gomez-Lopez N."/>
            <person name="Hain T."/>
            <person name="Hauf J."/>
            <person name="Jackson D."/>
            <person name="Jones L.-M."/>
            <person name="Kaerst U."/>
            <person name="Kreft J."/>
            <person name="Kuhn M."/>
            <person name="Kunst F."/>
            <person name="Kurapkat G."/>
            <person name="Madueno E."/>
            <person name="Maitournam A."/>
            <person name="Mata Vicente J."/>
            <person name="Ng E."/>
            <person name="Nedjari H."/>
            <person name="Nordsiek G."/>
            <person name="Novella S."/>
            <person name="de Pablos B."/>
            <person name="Perez-Diaz J.-C."/>
            <person name="Purcell R."/>
            <person name="Remmel B."/>
            <person name="Rose M."/>
            <person name="Schlueter T."/>
            <person name="Simoes N."/>
            <person name="Tierrez A."/>
            <person name="Vazquez-Boland J.-A."/>
            <person name="Voss H."/>
            <person name="Wehland J."/>
            <person name="Cossart P."/>
        </authorList>
    </citation>
    <scope>NUCLEOTIDE SEQUENCE [LARGE SCALE GENOMIC DNA]</scope>
    <source>
        <strain>ATCC BAA-679 / EGD-e</strain>
    </source>
</reference>
<feature type="chain" id="PRO_0000157547" description="Large ribosomal subunit protein bL12">
    <location>
        <begin position="1"/>
        <end position="120"/>
    </location>
</feature>
<accession>Q8YAA3</accession>
<gene>
    <name evidence="1" type="primary">rplL</name>
    <name type="ordered locus">lmo0251</name>
</gene>
<name>RL7_LISMO</name>
<sequence length="120" mass="12469">MALNIEEIIASVKEASVLELNDLVKAIEEEFGVTAAAPVAVAAAGGAAAEQTEFTVELASAGDSKIKVIKVVREITGLGLKEAKELVDNAPKALKEGIAKDEAEEIKAKLEEVGANVEVK</sequence>
<organism>
    <name type="scientific">Listeria monocytogenes serovar 1/2a (strain ATCC BAA-679 / EGD-e)</name>
    <dbReference type="NCBI Taxonomy" id="169963"/>
    <lineage>
        <taxon>Bacteria</taxon>
        <taxon>Bacillati</taxon>
        <taxon>Bacillota</taxon>
        <taxon>Bacilli</taxon>
        <taxon>Bacillales</taxon>
        <taxon>Listeriaceae</taxon>
        <taxon>Listeria</taxon>
    </lineage>
</organism>
<proteinExistence type="inferred from homology"/>
<dbReference type="EMBL" id="AL591974">
    <property type="protein sequence ID" value="CAD00778.1"/>
    <property type="molecule type" value="Genomic_DNA"/>
</dbReference>
<dbReference type="PIR" id="AD1106">
    <property type="entry name" value="AD1106"/>
</dbReference>
<dbReference type="RefSeq" id="NP_463782.1">
    <property type="nucleotide sequence ID" value="NC_003210.1"/>
</dbReference>
<dbReference type="RefSeq" id="WP_003723031.1">
    <property type="nucleotide sequence ID" value="NZ_CP149495.1"/>
</dbReference>
<dbReference type="SMR" id="Q8YAA3"/>
<dbReference type="STRING" id="169963.gene:17592902"/>
<dbReference type="PaxDb" id="169963-lmo0251"/>
<dbReference type="EnsemblBacteria" id="CAD00778">
    <property type="protein sequence ID" value="CAD00778"/>
    <property type="gene ID" value="CAD00778"/>
</dbReference>
<dbReference type="GeneID" id="987315"/>
<dbReference type="KEGG" id="lmo:lmo0251"/>
<dbReference type="PATRIC" id="fig|169963.11.peg.259"/>
<dbReference type="eggNOG" id="COG0222">
    <property type="taxonomic scope" value="Bacteria"/>
</dbReference>
<dbReference type="HOGENOM" id="CLU_086499_3_2_9"/>
<dbReference type="OrthoDB" id="9811748at2"/>
<dbReference type="PhylomeDB" id="Q8YAA3"/>
<dbReference type="BioCyc" id="LMON169963:LMO0251-MONOMER"/>
<dbReference type="Proteomes" id="UP000000817">
    <property type="component" value="Chromosome"/>
</dbReference>
<dbReference type="GO" id="GO:0022625">
    <property type="term" value="C:cytosolic large ribosomal subunit"/>
    <property type="evidence" value="ECO:0000318"/>
    <property type="project" value="GO_Central"/>
</dbReference>
<dbReference type="GO" id="GO:0003729">
    <property type="term" value="F:mRNA binding"/>
    <property type="evidence" value="ECO:0000318"/>
    <property type="project" value="GO_Central"/>
</dbReference>
<dbReference type="GO" id="GO:0003735">
    <property type="term" value="F:structural constituent of ribosome"/>
    <property type="evidence" value="ECO:0000318"/>
    <property type="project" value="GO_Central"/>
</dbReference>
<dbReference type="GO" id="GO:0006412">
    <property type="term" value="P:translation"/>
    <property type="evidence" value="ECO:0000318"/>
    <property type="project" value="GO_Central"/>
</dbReference>
<dbReference type="CDD" id="cd00387">
    <property type="entry name" value="Ribosomal_L7_L12"/>
    <property type="match status" value="1"/>
</dbReference>
<dbReference type="FunFam" id="1.20.5.710:FF:000002">
    <property type="entry name" value="50S ribosomal protein L7/L12"/>
    <property type="match status" value="1"/>
</dbReference>
<dbReference type="FunFam" id="3.30.1390.10:FF:000001">
    <property type="entry name" value="50S ribosomal protein L7/L12"/>
    <property type="match status" value="1"/>
</dbReference>
<dbReference type="Gene3D" id="3.30.1390.10">
    <property type="match status" value="1"/>
</dbReference>
<dbReference type="Gene3D" id="1.20.5.710">
    <property type="entry name" value="Single helix bin"/>
    <property type="match status" value="1"/>
</dbReference>
<dbReference type="HAMAP" id="MF_00368">
    <property type="entry name" value="Ribosomal_bL12"/>
    <property type="match status" value="1"/>
</dbReference>
<dbReference type="InterPro" id="IPR000206">
    <property type="entry name" value="Ribosomal_bL12"/>
</dbReference>
<dbReference type="InterPro" id="IPR013823">
    <property type="entry name" value="Ribosomal_bL12_C"/>
</dbReference>
<dbReference type="InterPro" id="IPR014719">
    <property type="entry name" value="Ribosomal_bL12_C/ClpS-like"/>
</dbReference>
<dbReference type="InterPro" id="IPR008932">
    <property type="entry name" value="Ribosomal_bL12_oligo"/>
</dbReference>
<dbReference type="InterPro" id="IPR036235">
    <property type="entry name" value="Ribosomal_bL12_oligo_N_sf"/>
</dbReference>
<dbReference type="NCBIfam" id="TIGR00855">
    <property type="entry name" value="L12"/>
    <property type="match status" value="1"/>
</dbReference>
<dbReference type="PANTHER" id="PTHR45987">
    <property type="entry name" value="39S RIBOSOMAL PROTEIN L12"/>
    <property type="match status" value="1"/>
</dbReference>
<dbReference type="PANTHER" id="PTHR45987:SF4">
    <property type="entry name" value="LARGE RIBOSOMAL SUBUNIT PROTEIN BL12M"/>
    <property type="match status" value="1"/>
</dbReference>
<dbReference type="Pfam" id="PF00542">
    <property type="entry name" value="Ribosomal_L12"/>
    <property type="match status" value="1"/>
</dbReference>
<dbReference type="Pfam" id="PF16320">
    <property type="entry name" value="Ribosomal_L12_N"/>
    <property type="match status" value="1"/>
</dbReference>
<dbReference type="SUPFAM" id="SSF54736">
    <property type="entry name" value="ClpS-like"/>
    <property type="match status" value="1"/>
</dbReference>
<dbReference type="SUPFAM" id="SSF48300">
    <property type="entry name" value="Ribosomal protein L7/12, oligomerisation (N-terminal) domain"/>
    <property type="match status" value="1"/>
</dbReference>
<comment type="function">
    <text evidence="1">Forms part of the ribosomal stalk which helps the ribosome interact with GTP-bound translation factors. Is thus essential for accurate translation.</text>
</comment>
<comment type="subunit">
    <text evidence="1">Homodimer. Part of the ribosomal stalk of the 50S ribosomal subunit. Forms a multimeric L10(L12)X complex, where L10 forms an elongated spine to which 2 to 4 L12 dimers bind in a sequential fashion. Binds GTP-bound translation factors.</text>
</comment>
<comment type="similarity">
    <text evidence="1">Belongs to the bacterial ribosomal protein bL12 family.</text>
</comment>
<keyword id="KW-1185">Reference proteome</keyword>
<keyword id="KW-0687">Ribonucleoprotein</keyword>
<keyword id="KW-0689">Ribosomal protein</keyword>
<evidence type="ECO:0000255" key="1">
    <source>
        <dbReference type="HAMAP-Rule" id="MF_00368"/>
    </source>
</evidence>
<evidence type="ECO:0000305" key="2"/>